<sequence>MASQISQLACFSSTNRQFHFQSRSFPCPMIRPQSFVVKSVDGNSSETPASLSYTAEVSKPVVEKTSKPYSTVDETATNKESITEPVEEDVATQPIRAAKIHDFCFGIPYGGLVVSGGLLGFAFSRNLTSLSTGVLYGGGLLALSTLSLKIWREGKSSFPYILGQAVLSAVVFWKNFTAYSMTKKLFPAGVFAVISACMLCFYSYVVLSGGNPPPKKLKPSATSPSY</sequence>
<keyword id="KW-0150">Chloroplast</keyword>
<keyword id="KW-0472">Membrane</keyword>
<keyword id="KW-0934">Plastid</keyword>
<keyword id="KW-1001">Plastid inner membrane</keyword>
<keyword id="KW-1185">Reference proteome</keyword>
<keyword id="KW-0809">Transit peptide</keyword>
<keyword id="KW-0812">Transmembrane</keyword>
<keyword id="KW-1133">Transmembrane helix</keyword>
<gene>
    <name evidence="6" type="primary">FAX1</name>
    <name evidence="9" type="ordered locus">At3g57280</name>
    <name evidence="11" type="ORF">F28O9.130</name>
</gene>
<name>FAX1_ARATH</name>
<comment type="function">
    <text evidence="5">Mediates the export of free fatty acid from the plastids. Potentially prefers palmitic acid (C16:0) over oleic acid (C18:1) and stearic acid (C18:0). Not involved in fatty acid activation. Required for biogenesis of the outer pollen cell wall, in particular for the assembly of exine and pollen coat and for the release of ketone wax components.</text>
</comment>
<comment type="subcellular location">
    <subcellularLocation>
        <location evidence="5">Plastid</location>
        <location evidence="5">Chloroplast inner membrane</location>
        <topology evidence="7">Multi-pass membrane protein</topology>
    </subcellularLocation>
</comment>
<comment type="tissue specificity">
    <text evidence="5">Expressed in cotyledons, leaves, sepals and pollen.</text>
</comment>
<comment type="developmental stage">
    <text evidence="5">Expressed at all developmental stages, with a peak at early pollen development.</text>
</comment>
<comment type="induction">
    <text evidence="4">Up-regulated upon induction of early leaf senescence.</text>
</comment>
<comment type="disruption phenotype">
    <text evidence="5">Reduced biomass and male sterility. Reduced size, thinner inflorescence stalks and flowers producing short siliques containing almost no seeds. Small vascular bundles with reduced secondary cell walls and modified cuticular wax composition with strongly reduced content in C29-ketone wax components.</text>
</comment>
<comment type="miscellaneous">
    <text evidence="8">For all TMEM14 proteins, 4 hydrophobic alpha-helical domains are predicted. However, NMR structure determination of the human TMEM14A showed that only 3 of these helices are membrane-spaning while the amphiphilic N-terminal helix is probably located at the lipid micelle-water interface.</text>
</comment>
<comment type="similarity">
    <text evidence="7">Belongs to the TMEM14 family.</text>
</comment>
<comment type="sequence caution" evidence="7">
    <conflict type="erroneous gene model prediction">
        <sequence resource="EMBL-CDS" id="CAB68134"/>
    </conflict>
</comment>
<proteinExistence type="evidence at protein level"/>
<dbReference type="EMBL" id="AL137080">
    <property type="protein sequence ID" value="CAB68134.1"/>
    <property type="status" value="ALT_SEQ"/>
    <property type="molecule type" value="Genomic_DNA"/>
</dbReference>
<dbReference type="EMBL" id="CP002686">
    <property type="protein sequence ID" value="AEE79635.1"/>
    <property type="molecule type" value="Genomic_DNA"/>
</dbReference>
<dbReference type="EMBL" id="AY039525">
    <property type="protein sequence ID" value="AAK62581.1"/>
    <property type="molecule type" value="mRNA"/>
</dbReference>
<dbReference type="EMBL" id="AY052733">
    <property type="protein sequence ID" value="AAK96447.1"/>
    <property type="molecule type" value="mRNA"/>
</dbReference>
<dbReference type="EMBL" id="AY085316">
    <property type="protein sequence ID" value="AAM62547.1"/>
    <property type="molecule type" value="mRNA"/>
</dbReference>
<dbReference type="PIR" id="T45806">
    <property type="entry name" value="T45806"/>
</dbReference>
<dbReference type="RefSeq" id="NP_567046.1">
    <property type="nucleotide sequence ID" value="NM_115588.4"/>
</dbReference>
<dbReference type="FunCoup" id="Q93V66">
    <property type="interactions" value="886"/>
</dbReference>
<dbReference type="IntAct" id="Q93V66">
    <property type="interactions" value="3"/>
</dbReference>
<dbReference type="STRING" id="3702.Q93V66"/>
<dbReference type="TCDB" id="2.A.126.2.4">
    <property type="family name" value="the fatty acid exporter (fax) family"/>
</dbReference>
<dbReference type="PaxDb" id="3702-AT3G57280.1"/>
<dbReference type="ProteomicsDB" id="230959"/>
<dbReference type="EnsemblPlants" id="AT3G57280.1">
    <property type="protein sequence ID" value="AT3G57280.1"/>
    <property type="gene ID" value="AT3G57280"/>
</dbReference>
<dbReference type="GeneID" id="824895"/>
<dbReference type="Gramene" id="AT3G57280.1">
    <property type="protein sequence ID" value="AT3G57280.1"/>
    <property type="gene ID" value="AT3G57280"/>
</dbReference>
<dbReference type="KEGG" id="ath:AT3G57280"/>
<dbReference type="Araport" id="AT3G57280"/>
<dbReference type="TAIR" id="AT3G57280">
    <property type="gene designation" value="FAX1"/>
</dbReference>
<dbReference type="eggNOG" id="KOG4267">
    <property type="taxonomic scope" value="Eukaryota"/>
</dbReference>
<dbReference type="HOGENOM" id="CLU_096652_0_1_1"/>
<dbReference type="InParanoid" id="Q93V66"/>
<dbReference type="OMA" id="QFHFQSR"/>
<dbReference type="OrthoDB" id="655183at2759"/>
<dbReference type="PhylomeDB" id="Q93V66"/>
<dbReference type="PRO" id="PR:Q93V66"/>
<dbReference type="Proteomes" id="UP000006548">
    <property type="component" value="Chromosome 3"/>
</dbReference>
<dbReference type="ExpressionAtlas" id="Q93V66">
    <property type="expression patterns" value="baseline and differential"/>
</dbReference>
<dbReference type="GO" id="GO:0009507">
    <property type="term" value="C:chloroplast"/>
    <property type="evidence" value="ECO:0007005"/>
    <property type="project" value="TAIR"/>
</dbReference>
<dbReference type="GO" id="GO:0009941">
    <property type="term" value="C:chloroplast envelope"/>
    <property type="evidence" value="ECO:0007005"/>
    <property type="project" value="TAIR"/>
</dbReference>
<dbReference type="GO" id="GO:0009706">
    <property type="term" value="C:chloroplast inner membrane"/>
    <property type="evidence" value="ECO:0000314"/>
    <property type="project" value="UniProtKB"/>
</dbReference>
<dbReference type="GO" id="GO:0005829">
    <property type="term" value="C:cytosol"/>
    <property type="evidence" value="ECO:0007005"/>
    <property type="project" value="TAIR"/>
</dbReference>
<dbReference type="GO" id="GO:0009536">
    <property type="term" value="C:plastid"/>
    <property type="evidence" value="ECO:0007005"/>
    <property type="project" value="TAIR"/>
</dbReference>
<dbReference type="GO" id="GO:0015245">
    <property type="term" value="F:fatty acid transmembrane transporter activity"/>
    <property type="evidence" value="ECO:0000316"/>
    <property type="project" value="TAIR"/>
</dbReference>
<dbReference type="GO" id="GO:1902001">
    <property type="term" value="P:fatty acid transmembrane transport"/>
    <property type="evidence" value="ECO:0000315"/>
    <property type="project" value="UniProtKB"/>
</dbReference>
<dbReference type="GO" id="GO:0015908">
    <property type="term" value="P:fatty acid transport"/>
    <property type="evidence" value="ECO:0000316"/>
    <property type="project" value="TAIR"/>
</dbReference>
<dbReference type="GO" id="GO:0055088">
    <property type="term" value="P:lipid homeostasis"/>
    <property type="evidence" value="ECO:0000315"/>
    <property type="project" value="TAIR"/>
</dbReference>
<dbReference type="GO" id="GO:0071668">
    <property type="term" value="P:plant-type cell wall assembly"/>
    <property type="evidence" value="ECO:0000315"/>
    <property type="project" value="TAIR"/>
</dbReference>
<dbReference type="GO" id="GO:0010208">
    <property type="term" value="P:pollen wall assembly"/>
    <property type="evidence" value="ECO:0000315"/>
    <property type="project" value="UniProtKB"/>
</dbReference>
<dbReference type="FunFam" id="1.10.10.1740:FF:000003">
    <property type="entry name" value="Protein FATTY ACID EXPORT 1, chloroplastic"/>
    <property type="match status" value="1"/>
</dbReference>
<dbReference type="Gene3D" id="1.10.10.1740">
    <property type="entry name" value="Transmembrane protein 14-like"/>
    <property type="match status" value="1"/>
</dbReference>
<dbReference type="InterPro" id="IPR005349">
    <property type="entry name" value="TMEM14"/>
</dbReference>
<dbReference type="InterPro" id="IPR044890">
    <property type="entry name" value="TMEM14_sf"/>
</dbReference>
<dbReference type="PANTHER" id="PTHR12668:SF48">
    <property type="entry name" value="PROTEIN FATTY ACID EXPORT 1, CHLOROPLASTIC"/>
    <property type="match status" value="1"/>
</dbReference>
<dbReference type="PANTHER" id="PTHR12668">
    <property type="entry name" value="TRANSMEMBRANE PROTEIN 14, 15"/>
    <property type="match status" value="1"/>
</dbReference>
<dbReference type="Pfam" id="PF03647">
    <property type="entry name" value="Tmemb_14"/>
    <property type="match status" value="1"/>
</dbReference>
<reference key="1">
    <citation type="journal article" date="2000" name="Nature">
        <title>Sequence and analysis of chromosome 3 of the plant Arabidopsis thaliana.</title>
        <authorList>
            <person name="Salanoubat M."/>
            <person name="Lemcke K."/>
            <person name="Rieger M."/>
            <person name="Ansorge W."/>
            <person name="Unseld M."/>
            <person name="Fartmann B."/>
            <person name="Valle G."/>
            <person name="Bloecker H."/>
            <person name="Perez-Alonso M."/>
            <person name="Obermaier B."/>
            <person name="Delseny M."/>
            <person name="Boutry M."/>
            <person name="Grivell L.A."/>
            <person name="Mache R."/>
            <person name="Puigdomenech P."/>
            <person name="De Simone V."/>
            <person name="Choisne N."/>
            <person name="Artiguenave F."/>
            <person name="Robert C."/>
            <person name="Brottier P."/>
            <person name="Wincker P."/>
            <person name="Cattolico L."/>
            <person name="Weissenbach J."/>
            <person name="Saurin W."/>
            <person name="Quetier F."/>
            <person name="Schaefer M."/>
            <person name="Mueller-Auer S."/>
            <person name="Gabel C."/>
            <person name="Fuchs M."/>
            <person name="Benes V."/>
            <person name="Wurmbach E."/>
            <person name="Drzonek H."/>
            <person name="Erfle H."/>
            <person name="Jordan N."/>
            <person name="Bangert S."/>
            <person name="Wiedelmann R."/>
            <person name="Kranz H."/>
            <person name="Voss H."/>
            <person name="Holland R."/>
            <person name="Brandt P."/>
            <person name="Nyakatura G."/>
            <person name="Vezzi A."/>
            <person name="D'Angelo M."/>
            <person name="Pallavicini A."/>
            <person name="Toppo S."/>
            <person name="Simionati B."/>
            <person name="Conrad A."/>
            <person name="Hornischer K."/>
            <person name="Kauer G."/>
            <person name="Loehnert T.-H."/>
            <person name="Nordsiek G."/>
            <person name="Reichelt J."/>
            <person name="Scharfe M."/>
            <person name="Schoen O."/>
            <person name="Bargues M."/>
            <person name="Terol J."/>
            <person name="Climent J."/>
            <person name="Navarro P."/>
            <person name="Collado C."/>
            <person name="Perez-Perez A."/>
            <person name="Ottenwaelder B."/>
            <person name="Duchemin D."/>
            <person name="Cooke R."/>
            <person name="Laudie M."/>
            <person name="Berger-Llauro C."/>
            <person name="Purnelle B."/>
            <person name="Masuy D."/>
            <person name="de Haan M."/>
            <person name="Maarse A.C."/>
            <person name="Alcaraz J.-P."/>
            <person name="Cottet A."/>
            <person name="Casacuberta E."/>
            <person name="Monfort A."/>
            <person name="Argiriou A."/>
            <person name="Flores M."/>
            <person name="Liguori R."/>
            <person name="Vitale D."/>
            <person name="Mannhaupt G."/>
            <person name="Haase D."/>
            <person name="Schoof H."/>
            <person name="Rudd S."/>
            <person name="Zaccaria P."/>
            <person name="Mewes H.-W."/>
            <person name="Mayer K.F.X."/>
            <person name="Kaul S."/>
            <person name="Town C.D."/>
            <person name="Koo H.L."/>
            <person name="Tallon L.J."/>
            <person name="Jenkins J."/>
            <person name="Rooney T."/>
            <person name="Rizzo M."/>
            <person name="Walts A."/>
            <person name="Utterback T."/>
            <person name="Fujii C.Y."/>
            <person name="Shea T.P."/>
            <person name="Creasy T.H."/>
            <person name="Haas B."/>
            <person name="Maiti R."/>
            <person name="Wu D."/>
            <person name="Peterson J."/>
            <person name="Van Aken S."/>
            <person name="Pai G."/>
            <person name="Militscher J."/>
            <person name="Sellers P."/>
            <person name="Gill J.E."/>
            <person name="Feldblyum T.V."/>
            <person name="Preuss D."/>
            <person name="Lin X."/>
            <person name="Nierman W.C."/>
            <person name="Salzberg S.L."/>
            <person name="White O."/>
            <person name="Venter J.C."/>
            <person name="Fraser C.M."/>
            <person name="Kaneko T."/>
            <person name="Nakamura Y."/>
            <person name="Sato S."/>
            <person name="Kato T."/>
            <person name="Asamizu E."/>
            <person name="Sasamoto S."/>
            <person name="Kimura T."/>
            <person name="Idesawa K."/>
            <person name="Kawashima K."/>
            <person name="Kishida Y."/>
            <person name="Kiyokawa C."/>
            <person name="Kohara M."/>
            <person name="Matsumoto M."/>
            <person name="Matsuno A."/>
            <person name="Muraki A."/>
            <person name="Nakayama S."/>
            <person name="Nakazaki N."/>
            <person name="Shinpo S."/>
            <person name="Takeuchi C."/>
            <person name="Wada T."/>
            <person name="Watanabe A."/>
            <person name="Yamada M."/>
            <person name="Yasuda M."/>
            <person name="Tabata S."/>
        </authorList>
    </citation>
    <scope>NUCLEOTIDE SEQUENCE [LARGE SCALE GENOMIC DNA]</scope>
    <source>
        <strain>cv. Columbia</strain>
    </source>
</reference>
<reference key="2">
    <citation type="journal article" date="2017" name="Plant J.">
        <title>Araport11: a complete reannotation of the Arabidopsis thaliana reference genome.</title>
        <authorList>
            <person name="Cheng C.Y."/>
            <person name="Krishnakumar V."/>
            <person name="Chan A.P."/>
            <person name="Thibaud-Nissen F."/>
            <person name="Schobel S."/>
            <person name="Town C.D."/>
        </authorList>
    </citation>
    <scope>GENOME REANNOTATION</scope>
    <source>
        <strain>cv. Columbia</strain>
    </source>
</reference>
<reference key="3">
    <citation type="journal article" date="2003" name="Science">
        <title>Empirical analysis of transcriptional activity in the Arabidopsis genome.</title>
        <authorList>
            <person name="Yamada K."/>
            <person name="Lim J."/>
            <person name="Dale J.M."/>
            <person name="Chen H."/>
            <person name="Shinn P."/>
            <person name="Palm C.J."/>
            <person name="Southwick A.M."/>
            <person name="Wu H.C."/>
            <person name="Kim C.J."/>
            <person name="Nguyen M."/>
            <person name="Pham P.K."/>
            <person name="Cheuk R.F."/>
            <person name="Karlin-Newmann G."/>
            <person name="Liu S.X."/>
            <person name="Lam B."/>
            <person name="Sakano H."/>
            <person name="Wu T."/>
            <person name="Yu G."/>
            <person name="Miranda M."/>
            <person name="Quach H.L."/>
            <person name="Tripp M."/>
            <person name="Chang C.H."/>
            <person name="Lee J.M."/>
            <person name="Toriumi M.J."/>
            <person name="Chan M.M."/>
            <person name="Tang C.C."/>
            <person name="Onodera C.S."/>
            <person name="Deng J.M."/>
            <person name="Akiyama K."/>
            <person name="Ansari Y."/>
            <person name="Arakawa T."/>
            <person name="Banh J."/>
            <person name="Banno F."/>
            <person name="Bowser L."/>
            <person name="Brooks S.Y."/>
            <person name="Carninci P."/>
            <person name="Chao Q."/>
            <person name="Choy N."/>
            <person name="Enju A."/>
            <person name="Goldsmith A.D."/>
            <person name="Gurjal M."/>
            <person name="Hansen N.F."/>
            <person name="Hayashizaki Y."/>
            <person name="Johnson-Hopson C."/>
            <person name="Hsuan V.W."/>
            <person name="Iida K."/>
            <person name="Karnes M."/>
            <person name="Khan S."/>
            <person name="Koesema E."/>
            <person name="Ishida J."/>
            <person name="Jiang P.X."/>
            <person name="Jones T."/>
            <person name="Kawai J."/>
            <person name="Kamiya A."/>
            <person name="Meyers C."/>
            <person name="Nakajima M."/>
            <person name="Narusaka M."/>
            <person name="Seki M."/>
            <person name="Sakurai T."/>
            <person name="Satou M."/>
            <person name="Tamse R."/>
            <person name="Vaysberg M."/>
            <person name="Wallender E.K."/>
            <person name="Wong C."/>
            <person name="Yamamura Y."/>
            <person name="Yuan S."/>
            <person name="Shinozaki K."/>
            <person name="Davis R.W."/>
            <person name="Theologis A."/>
            <person name="Ecker J.R."/>
        </authorList>
    </citation>
    <scope>NUCLEOTIDE SEQUENCE [LARGE SCALE MRNA]</scope>
    <source>
        <strain>cv. Columbia</strain>
    </source>
</reference>
<reference key="4">
    <citation type="submission" date="2002-03" db="EMBL/GenBank/DDBJ databases">
        <title>Full-length cDNA from Arabidopsis thaliana.</title>
        <authorList>
            <person name="Brover V.V."/>
            <person name="Troukhan M.E."/>
            <person name="Alexandrov N.A."/>
            <person name="Lu Y.-P."/>
            <person name="Flavell R.B."/>
            <person name="Feldmann K.A."/>
        </authorList>
    </citation>
    <scope>NUCLEOTIDE SEQUENCE [LARGE SCALE MRNA]</scope>
</reference>
<reference key="5">
    <citation type="journal article" date="2003" name="Mol. Cell. Proteomics">
        <title>Proteomics of the chloroplast envelope membranes from Arabidopsis thaliana.</title>
        <authorList>
            <person name="Ferro M."/>
            <person name="Salvi D."/>
            <person name="Brugiere S."/>
            <person name="Miras S."/>
            <person name="Kowalski S."/>
            <person name="Louwagie M."/>
            <person name="Garin J."/>
            <person name="Joyard J."/>
            <person name="Rolland N."/>
        </authorList>
    </citation>
    <scope>CLEAVAGE OF TRANSIT PEPTIDE AFTER SER-39</scope>
    <scope>IDENTIFICATION BY MASS SPECTROMETRY</scope>
    <scope>SUBCELLULAR LOCATION [LARGE SCALE ANALYSIS]</scope>
    <source>
        <strain>cv. Wassilewskija</strain>
    </source>
</reference>
<reference key="6">
    <citation type="journal article" date="2012" name="Plant Physiol.">
        <title>Early senescence and cell death in Arabidopsis saul1 mutants involves the PAD4-dependent salicylic acid pathway.</title>
        <authorList>
            <person name="Vogelmann K."/>
            <person name="Drechsel G."/>
            <person name="Bergler J."/>
            <person name="Subert C."/>
            <person name="Philippar K."/>
            <person name="Soll J."/>
            <person name="Engelmann J.C."/>
            <person name="Engelsdorf T."/>
            <person name="Voll L.M."/>
            <person name="Hoth S."/>
        </authorList>
    </citation>
    <scope>INDUCTION BY SENESCENCE</scope>
</reference>
<reference key="7">
    <citation type="journal article" date="2015" name="PLoS Biol.">
        <title>FAX1, a novel membrane protein mediating plastid fatty acid export.</title>
        <authorList>
            <person name="Li N."/>
            <person name="Guegel I.L."/>
            <person name="Giavalisco P."/>
            <person name="Zeisler V."/>
            <person name="Schreiber L."/>
            <person name="Soll J."/>
            <person name="Philippar K."/>
        </authorList>
    </citation>
    <scope>FUNCTION</scope>
    <scope>3D-STRUCTURE MODELING</scope>
    <scope>GENE FAMILY</scope>
    <scope>NOMENCLATURE</scope>
    <scope>SUBCELLULAR LOCATION</scope>
    <scope>DISRUPTION PHENOTYPE</scope>
    <scope>SUBSTRATE SPECIFICITY</scope>
    <scope>DEVELOPMENTAL STAGE</scope>
    <scope>TISSUE SPECIFICITY</scope>
</reference>
<accession>Q93V66</accession>
<accession>Q9M2L9</accession>
<protein>
    <recommendedName>
        <fullName evidence="6">Protein FATTY ACID EXPORT 1, chloroplastic</fullName>
        <shortName evidence="6">At-FAX1</shortName>
    </recommendedName>
</protein>
<evidence type="ECO:0000255" key="1"/>
<evidence type="ECO:0000256" key="2">
    <source>
        <dbReference type="SAM" id="MobiDB-lite"/>
    </source>
</evidence>
<evidence type="ECO:0000269" key="3">
    <source>
    </source>
</evidence>
<evidence type="ECO:0000269" key="4">
    <source>
    </source>
</evidence>
<evidence type="ECO:0000269" key="5">
    <source>
    </source>
</evidence>
<evidence type="ECO:0000303" key="6">
    <source>
    </source>
</evidence>
<evidence type="ECO:0000305" key="7"/>
<evidence type="ECO:0000305" key="8">
    <source>
    </source>
</evidence>
<evidence type="ECO:0000312" key="9">
    <source>
        <dbReference type="Araport" id="AT3G57280"/>
    </source>
</evidence>
<evidence type="ECO:0000312" key="10">
    <source>
        <dbReference type="EMBL" id="AAK96447.1"/>
    </source>
</evidence>
<evidence type="ECO:0000312" key="11">
    <source>
        <dbReference type="EMBL" id="CAB68134.1"/>
    </source>
</evidence>
<organism evidence="10">
    <name type="scientific">Arabidopsis thaliana</name>
    <name type="common">Mouse-ear cress</name>
    <dbReference type="NCBI Taxonomy" id="3702"/>
    <lineage>
        <taxon>Eukaryota</taxon>
        <taxon>Viridiplantae</taxon>
        <taxon>Streptophyta</taxon>
        <taxon>Embryophyta</taxon>
        <taxon>Tracheophyta</taxon>
        <taxon>Spermatophyta</taxon>
        <taxon>Magnoliopsida</taxon>
        <taxon>eudicotyledons</taxon>
        <taxon>Gunneridae</taxon>
        <taxon>Pentapetalae</taxon>
        <taxon>rosids</taxon>
        <taxon>malvids</taxon>
        <taxon>Brassicales</taxon>
        <taxon>Brassicaceae</taxon>
        <taxon>Camelineae</taxon>
        <taxon>Arabidopsis</taxon>
    </lineage>
</organism>
<feature type="transit peptide" description="Chloroplast" evidence="3">
    <location>
        <begin position="1"/>
        <end position="39"/>
    </location>
</feature>
<feature type="chain" id="PRO_0000432801" description="Protein FATTY ACID EXPORT 1, chloroplastic">
    <location>
        <begin position="40"/>
        <end position="226"/>
    </location>
</feature>
<feature type="transmembrane region" description="Helical; Name=1" evidence="1">
    <location>
        <begin position="130"/>
        <end position="150"/>
    </location>
</feature>
<feature type="transmembrane region" description="Helical; Name=2" evidence="1">
    <location>
        <begin position="158"/>
        <end position="178"/>
    </location>
</feature>
<feature type="transmembrane region" description="Helical; Name=3" evidence="1">
    <location>
        <begin position="186"/>
        <end position="206"/>
    </location>
</feature>
<feature type="region of interest" description="Disordered" evidence="2">
    <location>
        <begin position="66"/>
        <end position="87"/>
    </location>
</feature>
<feature type="compositionally biased region" description="Polar residues" evidence="2">
    <location>
        <begin position="67"/>
        <end position="80"/>
    </location>
</feature>